<sequence>MKPETFYNLLAEQNLPLSDQQKEQFERYFELLVEWNEKINLTAITDKEEVYLKHFYDSIAPILQGLIPNETIKLLDIGAGAGFPSLPMKILYPELDVTIIDSLNKRINFLQLLAQELDLNGVHFYHGRAEDFAQDKNFRAQYDFVTARAVARMQVLSELTIPYLKVGGKLLALKASNAPEELLEAKNALNLLFSKVEDNLSYALPNRDPRYITVVEKKKETPNKYPRKAGMPNKRPL</sequence>
<evidence type="ECO:0000255" key="1">
    <source>
        <dbReference type="HAMAP-Rule" id="MF_00074"/>
    </source>
</evidence>
<evidence type="ECO:0000256" key="2">
    <source>
        <dbReference type="SAM" id="MobiDB-lite"/>
    </source>
</evidence>
<reference key="1">
    <citation type="journal article" date="2010" name="Genome Biol.">
        <title>Structure and dynamics of the pan-genome of Streptococcus pneumoniae and closely related species.</title>
        <authorList>
            <person name="Donati C."/>
            <person name="Hiller N.L."/>
            <person name="Tettelin H."/>
            <person name="Muzzi A."/>
            <person name="Croucher N.J."/>
            <person name="Angiuoli S.V."/>
            <person name="Oggioni M."/>
            <person name="Dunning Hotopp J.C."/>
            <person name="Hu F.Z."/>
            <person name="Riley D.R."/>
            <person name="Covacci A."/>
            <person name="Mitchell T.J."/>
            <person name="Bentley S.D."/>
            <person name="Kilian M."/>
            <person name="Ehrlich G.D."/>
            <person name="Rappuoli R."/>
            <person name="Moxon E.R."/>
            <person name="Masignani V."/>
        </authorList>
    </citation>
    <scope>NUCLEOTIDE SEQUENCE [LARGE SCALE GENOMIC DNA]</scope>
    <source>
        <strain>JJA</strain>
    </source>
</reference>
<gene>
    <name evidence="1" type="primary">rsmG</name>
    <name type="ordered locus">SPJ_1200</name>
</gene>
<dbReference type="EC" id="2.1.1.-" evidence="1"/>
<dbReference type="EMBL" id="CP000919">
    <property type="protein sequence ID" value="ACO19157.1"/>
    <property type="molecule type" value="Genomic_DNA"/>
</dbReference>
<dbReference type="RefSeq" id="WP_000801931.1">
    <property type="nucleotide sequence ID" value="NC_012466.1"/>
</dbReference>
<dbReference type="SMR" id="C1CEP0"/>
<dbReference type="KEGG" id="sjj:SPJ_1200"/>
<dbReference type="HOGENOM" id="CLU_065341_0_2_9"/>
<dbReference type="Proteomes" id="UP000002206">
    <property type="component" value="Chromosome"/>
</dbReference>
<dbReference type="GO" id="GO:0005829">
    <property type="term" value="C:cytosol"/>
    <property type="evidence" value="ECO:0007669"/>
    <property type="project" value="TreeGrafter"/>
</dbReference>
<dbReference type="GO" id="GO:0070043">
    <property type="term" value="F:rRNA (guanine-N7-)-methyltransferase activity"/>
    <property type="evidence" value="ECO:0007669"/>
    <property type="project" value="UniProtKB-UniRule"/>
</dbReference>
<dbReference type="CDD" id="cd02440">
    <property type="entry name" value="AdoMet_MTases"/>
    <property type="match status" value="1"/>
</dbReference>
<dbReference type="FunFam" id="3.40.50.150:FF:000041">
    <property type="entry name" value="Ribosomal RNA small subunit methyltransferase G"/>
    <property type="match status" value="1"/>
</dbReference>
<dbReference type="Gene3D" id="3.40.50.150">
    <property type="entry name" value="Vaccinia Virus protein VP39"/>
    <property type="match status" value="1"/>
</dbReference>
<dbReference type="HAMAP" id="MF_00074">
    <property type="entry name" value="16SrRNA_methyltr_G"/>
    <property type="match status" value="1"/>
</dbReference>
<dbReference type="InterPro" id="IPR003682">
    <property type="entry name" value="rRNA_ssu_MeTfrase_G"/>
</dbReference>
<dbReference type="InterPro" id="IPR029063">
    <property type="entry name" value="SAM-dependent_MTases_sf"/>
</dbReference>
<dbReference type="NCBIfam" id="TIGR00138">
    <property type="entry name" value="rsmG_gidB"/>
    <property type="match status" value="1"/>
</dbReference>
<dbReference type="PANTHER" id="PTHR31760">
    <property type="entry name" value="S-ADENOSYL-L-METHIONINE-DEPENDENT METHYLTRANSFERASES SUPERFAMILY PROTEIN"/>
    <property type="match status" value="1"/>
</dbReference>
<dbReference type="PANTHER" id="PTHR31760:SF0">
    <property type="entry name" value="S-ADENOSYL-L-METHIONINE-DEPENDENT METHYLTRANSFERASES SUPERFAMILY PROTEIN"/>
    <property type="match status" value="1"/>
</dbReference>
<dbReference type="Pfam" id="PF02527">
    <property type="entry name" value="GidB"/>
    <property type="match status" value="1"/>
</dbReference>
<dbReference type="PIRSF" id="PIRSF003078">
    <property type="entry name" value="GidB"/>
    <property type="match status" value="1"/>
</dbReference>
<dbReference type="SUPFAM" id="SSF53335">
    <property type="entry name" value="S-adenosyl-L-methionine-dependent methyltransferases"/>
    <property type="match status" value="1"/>
</dbReference>
<accession>C1CEP0</accession>
<protein>
    <recommendedName>
        <fullName evidence="1">Ribosomal RNA small subunit methyltransferase G</fullName>
        <ecNumber evidence="1">2.1.1.-</ecNumber>
    </recommendedName>
    <alternativeName>
        <fullName evidence="1">16S rRNA 7-methylguanosine methyltransferase</fullName>
        <shortName evidence="1">16S rRNA m7G methyltransferase</shortName>
    </alternativeName>
</protein>
<comment type="function">
    <text evidence="1">Specifically methylates the N7 position of a guanine in 16S rRNA.</text>
</comment>
<comment type="subcellular location">
    <subcellularLocation>
        <location evidence="1">Cytoplasm</location>
    </subcellularLocation>
</comment>
<comment type="similarity">
    <text evidence="1">Belongs to the methyltransferase superfamily. RNA methyltransferase RsmG family.</text>
</comment>
<keyword id="KW-0963">Cytoplasm</keyword>
<keyword id="KW-0489">Methyltransferase</keyword>
<keyword id="KW-0698">rRNA processing</keyword>
<keyword id="KW-0949">S-adenosyl-L-methionine</keyword>
<keyword id="KW-0808">Transferase</keyword>
<feature type="chain" id="PRO_1000118203" description="Ribosomal RNA small subunit methyltransferase G">
    <location>
        <begin position="1"/>
        <end position="237"/>
    </location>
</feature>
<feature type="region of interest" description="Disordered" evidence="2">
    <location>
        <begin position="218"/>
        <end position="237"/>
    </location>
</feature>
<feature type="binding site" evidence="1">
    <location>
        <position position="78"/>
    </location>
    <ligand>
        <name>S-adenosyl-L-methionine</name>
        <dbReference type="ChEBI" id="CHEBI:59789"/>
    </ligand>
</feature>
<feature type="binding site" evidence="1">
    <location>
        <position position="83"/>
    </location>
    <ligand>
        <name>S-adenosyl-L-methionine</name>
        <dbReference type="ChEBI" id="CHEBI:59789"/>
    </ligand>
</feature>
<feature type="binding site" evidence="1">
    <location>
        <begin position="129"/>
        <end position="130"/>
    </location>
    <ligand>
        <name>S-adenosyl-L-methionine</name>
        <dbReference type="ChEBI" id="CHEBI:59789"/>
    </ligand>
</feature>
<feature type="binding site" evidence="1">
    <location>
        <position position="148"/>
    </location>
    <ligand>
        <name>S-adenosyl-L-methionine</name>
        <dbReference type="ChEBI" id="CHEBI:59789"/>
    </ligand>
</feature>
<organism>
    <name type="scientific">Streptococcus pneumoniae (strain JJA)</name>
    <dbReference type="NCBI Taxonomy" id="488222"/>
    <lineage>
        <taxon>Bacteria</taxon>
        <taxon>Bacillati</taxon>
        <taxon>Bacillota</taxon>
        <taxon>Bacilli</taxon>
        <taxon>Lactobacillales</taxon>
        <taxon>Streptococcaceae</taxon>
        <taxon>Streptococcus</taxon>
    </lineage>
</organism>
<name>RSMG_STRZJ</name>
<proteinExistence type="inferred from homology"/>